<evidence type="ECO:0000255" key="1">
    <source>
        <dbReference type="HAMAP-Rule" id="MF_00732"/>
    </source>
</evidence>
<reference key="1">
    <citation type="submission" date="2008-10" db="EMBL/GenBank/DDBJ databases">
        <title>Genome sequence of Bacillus cereus B4264.</title>
        <authorList>
            <person name="Dodson R.J."/>
            <person name="Durkin A.S."/>
            <person name="Rosovitz M.J."/>
            <person name="Rasko D.A."/>
            <person name="Hoffmaster A."/>
            <person name="Ravel J."/>
            <person name="Sutton G."/>
        </authorList>
    </citation>
    <scope>NUCLEOTIDE SEQUENCE [LARGE SCALE GENOMIC DNA]</scope>
    <source>
        <strain>B4264</strain>
    </source>
</reference>
<feature type="chain" id="PRO_1000132744" description="HTH-type transcriptional regulator MntR">
    <location>
        <begin position="1"/>
        <end position="142"/>
    </location>
</feature>
<feature type="domain" description="HTH dtxR-type" evidence="1">
    <location>
        <begin position="1"/>
        <end position="63"/>
    </location>
</feature>
<feature type="binding site" evidence="1">
    <location>
        <position position="8"/>
    </location>
    <ligand>
        <name>Mn(2+)</name>
        <dbReference type="ChEBI" id="CHEBI:29035"/>
        <label>1</label>
    </ligand>
</feature>
<feature type="binding site" evidence="1">
    <location>
        <position position="11"/>
    </location>
    <ligand>
        <name>Mn(2+)</name>
        <dbReference type="ChEBI" id="CHEBI:29035"/>
        <label>2</label>
    </ligand>
</feature>
<feature type="binding site" evidence="1">
    <location>
        <position position="77"/>
    </location>
    <ligand>
        <name>Mn(2+)</name>
        <dbReference type="ChEBI" id="CHEBI:29035"/>
        <label>2</label>
    </ligand>
</feature>
<feature type="binding site" evidence="1">
    <location>
        <position position="99"/>
    </location>
    <ligand>
        <name>Mn(2+)</name>
        <dbReference type="ChEBI" id="CHEBI:29035"/>
        <label>1</label>
    </ligand>
</feature>
<feature type="binding site" evidence="1">
    <location>
        <position position="99"/>
    </location>
    <ligand>
        <name>Mn(2+)</name>
        <dbReference type="ChEBI" id="CHEBI:29035"/>
        <label>2</label>
    </ligand>
</feature>
<feature type="binding site" evidence="1">
    <location>
        <position position="102"/>
    </location>
    <ligand>
        <name>Mn(2+)</name>
        <dbReference type="ChEBI" id="CHEBI:29035"/>
        <label>1</label>
    </ligand>
</feature>
<feature type="binding site" evidence="1">
    <location>
        <position position="102"/>
    </location>
    <ligand>
        <name>Mn(2+)</name>
        <dbReference type="ChEBI" id="CHEBI:29035"/>
        <label>2</label>
    </ligand>
</feature>
<feature type="binding site" evidence="1">
    <location>
        <position position="103"/>
    </location>
    <ligand>
        <name>Mn(2+)</name>
        <dbReference type="ChEBI" id="CHEBI:29035"/>
        <label>1</label>
    </ligand>
</feature>
<comment type="function">
    <text evidence="1">Central regulator of manganese homeostasis.</text>
</comment>
<comment type="activity regulation">
    <text evidence="1">DNA binding is strongly activated by Mn(2+).</text>
</comment>
<comment type="subunit">
    <text evidence="1">Homodimer.</text>
</comment>
<comment type="subcellular location">
    <subcellularLocation>
        <location evidence="1">Cytoplasm</location>
    </subcellularLocation>
</comment>
<comment type="similarity">
    <text evidence="1">Belongs to the DtxR/MntR family.</text>
</comment>
<organism>
    <name type="scientific">Bacillus cereus (strain B4264)</name>
    <dbReference type="NCBI Taxonomy" id="405532"/>
    <lineage>
        <taxon>Bacteria</taxon>
        <taxon>Bacillati</taxon>
        <taxon>Bacillota</taxon>
        <taxon>Bacilli</taxon>
        <taxon>Bacillales</taxon>
        <taxon>Bacillaceae</taxon>
        <taxon>Bacillus</taxon>
        <taxon>Bacillus cereus group</taxon>
    </lineage>
</organism>
<protein>
    <recommendedName>
        <fullName evidence="1">HTH-type transcriptional regulator MntR</fullName>
    </recommendedName>
    <alternativeName>
        <fullName evidence="1">Manganese transport regulator</fullName>
    </alternativeName>
</protein>
<dbReference type="EMBL" id="CP001176">
    <property type="protein sequence ID" value="ACK60639.1"/>
    <property type="molecule type" value="Genomic_DNA"/>
</dbReference>
<dbReference type="RefSeq" id="WP_001143084.1">
    <property type="nucleotide sequence ID" value="NZ_VEHB01000002.1"/>
</dbReference>
<dbReference type="SMR" id="B7HB75"/>
<dbReference type="KEGG" id="bcb:BCB4264_A4314"/>
<dbReference type="HOGENOM" id="CLU_069532_3_0_9"/>
<dbReference type="Proteomes" id="UP000007096">
    <property type="component" value="Chromosome"/>
</dbReference>
<dbReference type="GO" id="GO:0005737">
    <property type="term" value="C:cytoplasm"/>
    <property type="evidence" value="ECO:0007669"/>
    <property type="project" value="UniProtKB-SubCell"/>
</dbReference>
<dbReference type="GO" id="GO:0003677">
    <property type="term" value="F:DNA binding"/>
    <property type="evidence" value="ECO:0007669"/>
    <property type="project" value="UniProtKB-KW"/>
</dbReference>
<dbReference type="GO" id="GO:0003700">
    <property type="term" value="F:DNA-binding transcription factor activity"/>
    <property type="evidence" value="ECO:0007669"/>
    <property type="project" value="UniProtKB-UniRule"/>
</dbReference>
<dbReference type="GO" id="GO:0030145">
    <property type="term" value="F:manganese ion binding"/>
    <property type="evidence" value="ECO:0007669"/>
    <property type="project" value="UniProtKB-UniRule"/>
</dbReference>
<dbReference type="GO" id="GO:0046983">
    <property type="term" value="F:protein dimerization activity"/>
    <property type="evidence" value="ECO:0007669"/>
    <property type="project" value="InterPro"/>
</dbReference>
<dbReference type="GO" id="GO:0030026">
    <property type="term" value="P:intracellular manganese ion homeostasis"/>
    <property type="evidence" value="ECO:0007669"/>
    <property type="project" value="UniProtKB-UniRule"/>
</dbReference>
<dbReference type="FunFam" id="1.10.10.10:FF:000189">
    <property type="entry name" value="HTH-type transcriptional regulator MntR"/>
    <property type="match status" value="1"/>
</dbReference>
<dbReference type="FunFam" id="1.10.60.10:FF:000003">
    <property type="entry name" value="HTH-type transcriptional regulator MntR"/>
    <property type="match status" value="1"/>
</dbReference>
<dbReference type="Gene3D" id="1.10.60.10">
    <property type="entry name" value="Iron dependent repressor, metal binding and dimerisation domain"/>
    <property type="match status" value="1"/>
</dbReference>
<dbReference type="Gene3D" id="1.10.10.10">
    <property type="entry name" value="Winged helix-like DNA-binding domain superfamily/Winged helix DNA-binding domain"/>
    <property type="match status" value="1"/>
</dbReference>
<dbReference type="HAMAP" id="MF_00732">
    <property type="entry name" value="HTH_MntR"/>
    <property type="match status" value="1"/>
</dbReference>
<dbReference type="InterPro" id="IPR050536">
    <property type="entry name" value="DtxR_MntR_Metal-Reg"/>
</dbReference>
<dbReference type="InterPro" id="IPR001367">
    <property type="entry name" value="Fe_dep_repressor"/>
</dbReference>
<dbReference type="InterPro" id="IPR036421">
    <property type="entry name" value="Fe_dep_repressor_sf"/>
</dbReference>
<dbReference type="InterPro" id="IPR022687">
    <property type="entry name" value="HTH_DTXR"/>
</dbReference>
<dbReference type="InterPro" id="IPR022897">
    <property type="entry name" value="HTH_tscrpt_reg_MntR"/>
</dbReference>
<dbReference type="InterPro" id="IPR022689">
    <property type="entry name" value="Iron_dep_repressor"/>
</dbReference>
<dbReference type="InterPro" id="IPR036388">
    <property type="entry name" value="WH-like_DNA-bd_sf"/>
</dbReference>
<dbReference type="InterPro" id="IPR036390">
    <property type="entry name" value="WH_DNA-bd_sf"/>
</dbReference>
<dbReference type="NCBIfam" id="NF003025">
    <property type="entry name" value="PRK03902.1"/>
    <property type="match status" value="1"/>
</dbReference>
<dbReference type="PANTHER" id="PTHR33238">
    <property type="entry name" value="IRON (METAL) DEPENDENT REPRESSOR, DTXR FAMILY"/>
    <property type="match status" value="1"/>
</dbReference>
<dbReference type="PANTHER" id="PTHR33238:SF11">
    <property type="entry name" value="TRANSCRIPTIONAL REGULATOR MNTR"/>
    <property type="match status" value="1"/>
</dbReference>
<dbReference type="Pfam" id="PF02742">
    <property type="entry name" value="Fe_dep_repr_C"/>
    <property type="match status" value="1"/>
</dbReference>
<dbReference type="Pfam" id="PF01325">
    <property type="entry name" value="Fe_dep_repress"/>
    <property type="match status" value="1"/>
</dbReference>
<dbReference type="SMART" id="SM00529">
    <property type="entry name" value="HTH_DTXR"/>
    <property type="match status" value="1"/>
</dbReference>
<dbReference type="SUPFAM" id="SSF47979">
    <property type="entry name" value="Iron-dependent repressor protein, dimerization domain"/>
    <property type="match status" value="1"/>
</dbReference>
<dbReference type="SUPFAM" id="SSF46785">
    <property type="entry name" value="Winged helix' DNA-binding domain"/>
    <property type="match status" value="1"/>
</dbReference>
<dbReference type="PROSITE" id="PS50944">
    <property type="entry name" value="HTH_DTXR"/>
    <property type="match status" value="1"/>
</dbReference>
<name>MNTR_BACC4</name>
<accession>B7HB75</accession>
<sequence length="142" mass="16566">MPTPSMEDYIEQIYLLIDEKGYARVSDIAEALSVHPSSVTKMVQKLDKDEYLIYEKYRGLVLTTKGKKIGERLVYRHDLLEQFMRIIGVDESKIYNDVEGIEHHLSWEAIDRIGDLVQYFEQDAVRVETLRGVQRANEEKSN</sequence>
<keyword id="KW-0010">Activator</keyword>
<keyword id="KW-0963">Cytoplasm</keyword>
<keyword id="KW-0238">DNA-binding</keyword>
<keyword id="KW-0464">Manganese</keyword>
<keyword id="KW-0479">Metal-binding</keyword>
<keyword id="KW-0678">Repressor</keyword>
<keyword id="KW-0804">Transcription</keyword>
<keyword id="KW-0805">Transcription regulation</keyword>
<proteinExistence type="inferred from homology"/>
<gene>
    <name evidence="1" type="primary">mntR</name>
    <name type="ordered locus">BCB4264_A4314</name>
</gene>